<gene>
    <name evidence="1" type="primary">pyrD</name>
    <name type="ordered locus">Rpal_0865</name>
</gene>
<proteinExistence type="inferred from homology"/>
<organism>
    <name type="scientific">Rhodopseudomonas palustris (strain TIE-1)</name>
    <dbReference type="NCBI Taxonomy" id="395960"/>
    <lineage>
        <taxon>Bacteria</taxon>
        <taxon>Pseudomonadati</taxon>
        <taxon>Pseudomonadota</taxon>
        <taxon>Alphaproteobacteria</taxon>
        <taxon>Hyphomicrobiales</taxon>
        <taxon>Nitrobacteraceae</taxon>
        <taxon>Rhodopseudomonas</taxon>
    </lineage>
</organism>
<sequence>MIRAFDAVSLPLLRWLDPEDAHRLAIQGLKLWPPVKPRPDDSKLAVRAFGLNFSNPVGIAAGFDKNAEAPDALLRLGFGFVEVGTVTPKPQAGNPRPRLFRLERDEAVINRMGFNNEGAEAVLRRLAARAQYGGIVGVNVGANKDSDDRVADYVKLIETFAPLASYFTVNVSSPNTPGLRNLQQAAALDDLLARVIDARERVRAAAGDTPVLLKIAPDLSLGELDDVVHIARSRRVDGMIVANTTLSRSPTLRERTKMNEQGGLSGRPLFRLSTRMVAETFVRAEGAFPLIGVGGIDSGGAALTKIRAGATLVQLYSALVYKGLGLVESIKADLASTLLRTGRDSLAEIVGADAPMITAEEWPV</sequence>
<feature type="chain" id="PRO_1000100280" description="Dihydroorotate dehydrogenase (quinone)">
    <location>
        <begin position="1"/>
        <end position="364"/>
    </location>
</feature>
<feature type="active site" description="Nucleophile" evidence="1">
    <location>
        <position position="173"/>
    </location>
</feature>
<feature type="binding site" evidence="1">
    <location>
        <begin position="61"/>
        <end position="65"/>
    </location>
    <ligand>
        <name>FMN</name>
        <dbReference type="ChEBI" id="CHEBI:58210"/>
    </ligand>
</feature>
<feature type="binding site" evidence="1">
    <location>
        <position position="65"/>
    </location>
    <ligand>
        <name>substrate</name>
    </ligand>
</feature>
<feature type="binding site" evidence="1">
    <location>
        <position position="85"/>
    </location>
    <ligand>
        <name>FMN</name>
        <dbReference type="ChEBI" id="CHEBI:58210"/>
    </ligand>
</feature>
<feature type="binding site" evidence="1">
    <location>
        <begin position="110"/>
        <end position="114"/>
    </location>
    <ligand>
        <name>substrate</name>
    </ligand>
</feature>
<feature type="binding site" evidence="1">
    <location>
        <position position="139"/>
    </location>
    <ligand>
        <name>FMN</name>
        <dbReference type="ChEBI" id="CHEBI:58210"/>
    </ligand>
</feature>
<feature type="binding site" evidence="1">
    <location>
        <position position="170"/>
    </location>
    <ligand>
        <name>FMN</name>
        <dbReference type="ChEBI" id="CHEBI:58210"/>
    </ligand>
</feature>
<feature type="binding site" evidence="1">
    <location>
        <position position="170"/>
    </location>
    <ligand>
        <name>substrate</name>
    </ligand>
</feature>
<feature type="binding site" evidence="1">
    <location>
        <position position="175"/>
    </location>
    <ligand>
        <name>substrate</name>
    </ligand>
</feature>
<feature type="binding site" evidence="1">
    <location>
        <position position="214"/>
    </location>
    <ligand>
        <name>FMN</name>
        <dbReference type="ChEBI" id="CHEBI:58210"/>
    </ligand>
</feature>
<feature type="binding site" evidence="1">
    <location>
        <position position="242"/>
    </location>
    <ligand>
        <name>FMN</name>
        <dbReference type="ChEBI" id="CHEBI:58210"/>
    </ligand>
</feature>
<feature type="binding site" evidence="1">
    <location>
        <begin position="243"/>
        <end position="244"/>
    </location>
    <ligand>
        <name>substrate</name>
    </ligand>
</feature>
<feature type="binding site" evidence="1">
    <location>
        <position position="266"/>
    </location>
    <ligand>
        <name>FMN</name>
        <dbReference type="ChEBI" id="CHEBI:58210"/>
    </ligand>
</feature>
<feature type="binding site" evidence="1">
    <location>
        <position position="295"/>
    </location>
    <ligand>
        <name>FMN</name>
        <dbReference type="ChEBI" id="CHEBI:58210"/>
    </ligand>
</feature>
<feature type="binding site" evidence="1">
    <location>
        <begin position="316"/>
        <end position="317"/>
    </location>
    <ligand>
        <name>FMN</name>
        <dbReference type="ChEBI" id="CHEBI:58210"/>
    </ligand>
</feature>
<dbReference type="EC" id="1.3.5.2" evidence="1"/>
<dbReference type="EMBL" id="CP001096">
    <property type="protein sequence ID" value="ACE99422.1"/>
    <property type="molecule type" value="Genomic_DNA"/>
</dbReference>
<dbReference type="RefSeq" id="WP_012494487.1">
    <property type="nucleotide sequence ID" value="NC_011004.1"/>
</dbReference>
<dbReference type="SMR" id="B3QEE3"/>
<dbReference type="KEGG" id="rpt:Rpal_0865"/>
<dbReference type="HOGENOM" id="CLU_013640_0_0_5"/>
<dbReference type="OrthoDB" id="9802377at2"/>
<dbReference type="UniPathway" id="UPA00070">
    <property type="reaction ID" value="UER00946"/>
</dbReference>
<dbReference type="Proteomes" id="UP000001725">
    <property type="component" value="Chromosome"/>
</dbReference>
<dbReference type="GO" id="GO:0005737">
    <property type="term" value="C:cytoplasm"/>
    <property type="evidence" value="ECO:0007669"/>
    <property type="project" value="InterPro"/>
</dbReference>
<dbReference type="GO" id="GO:0005886">
    <property type="term" value="C:plasma membrane"/>
    <property type="evidence" value="ECO:0007669"/>
    <property type="project" value="UniProtKB-SubCell"/>
</dbReference>
<dbReference type="GO" id="GO:0106430">
    <property type="term" value="F:dihydroorotate dehydrogenase (quinone) activity"/>
    <property type="evidence" value="ECO:0007669"/>
    <property type="project" value="UniProtKB-EC"/>
</dbReference>
<dbReference type="GO" id="GO:0006207">
    <property type="term" value="P:'de novo' pyrimidine nucleobase biosynthetic process"/>
    <property type="evidence" value="ECO:0007669"/>
    <property type="project" value="InterPro"/>
</dbReference>
<dbReference type="GO" id="GO:0044205">
    <property type="term" value="P:'de novo' UMP biosynthetic process"/>
    <property type="evidence" value="ECO:0007669"/>
    <property type="project" value="UniProtKB-UniRule"/>
</dbReference>
<dbReference type="CDD" id="cd04738">
    <property type="entry name" value="DHOD_2_like"/>
    <property type="match status" value="1"/>
</dbReference>
<dbReference type="Gene3D" id="3.20.20.70">
    <property type="entry name" value="Aldolase class I"/>
    <property type="match status" value="1"/>
</dbReference>
<dbReference type="HAMAP" id="MF_00225">
    <property type="entry name" value="DHO_dh_type2"/>
    <property type="match status" value="1"/>
</dbReference>
<dbReference type="InterPro" id="IPR013785">
    <property type="entry name" value="Aldolase_TIM"/>
</dbReference>
<dbReference type="InterPro" id="IPR050074">
    <property type="entry name" value="DHO_dehydrogenase"/>
</dbReference>
<dbReference type="InterPro" id="IPR005719">
    <property type="entry name" value="Dihydroorotate_DH_2"/>
</dbReference>
<dbReference type="InterPro" id="IPR005720">
    <property type="entry name" value="Dihydroorotate_DH_cat"/>
</dbReference>
<dbReference type="InterPro" id="IPR001295">
    <property type="entry name" value="Dihydroorotate_DH_CS"/>
</dbReference>
<dbReference type="NCBIfam" id="NF003645">
    <property type="entry name" value="PRK05286.1-2"/>
    <property type="match status" value="1"/>
</dbReference>
<dbReference type="NCBIfam" id="NF003652">
    <property type="entry name" value="PRK05286.2-5"/>
    <property type="match status" value="1"/>
</dbReference>
<dbReference type="NCBIfam" id="TIGR01036">
    <property type="entry name" value="pyrD_sub2"/>
    <property type="match status" value="1"/>
</dbReference>
<dbReference type="PANTHER" id="PTHR48109:SF4">
    <property type="entry name" value="DIHYDROOROTATE DEHYDROGENASE (QUINONE), MITOCHONDRIAL"/>
    <property type="match status" value="1"/>
</dbReference>
<dbReference type="PANTHER" id="PTHR48109">
    <property type="entry name" value="DIHYDROOROTATE DEHYDROGENASE (QUINONE), MITOCHONDRIAL-RELATED"/>
    <property type="match status" value="1"/>
</dbReference>
<dbReference type="Pfam" id="PF01180">
    <property type="entry name" value="DHO_dh"/>
    <property type="match status" value="1"/>
</dbReference>
<dbReference type="SUPFAM" id="SSF51395">
    <property type="entry name" value="FMN-linked oxidoreductases"/>
    <property type="match status" value="1"/>
</dbReference>
<dbReference type="PROSITE" id="PS00911">
    <property type="entry name" value="DHODEHASE_1"/>
    <property type="match status" value="1"/>
</dbReference>
<dbReference type="PROSITE" id="PS00912">
    <property type="entry name" value="DHODEHASE_2"/>
    <property type="match status" value="1"/>
</dbReference>
<accession>B3QEE3</accession>
<comment type="function">
    <text evidence="1">Catalyzes the conversion of dihydroorotate to orotate with quinone as electron acceptor.</text>
</comment>
<comment type="catalytic activity">
    <reaction evidence="1">
        <text>(S)-dihydroorotate + a quinone = orotate + a quinol</text>
        <dbReference type="Rhea" id="RHEA:30187"/>
        <dbReference type="ChEBI" id="CHEBI:24646"/>
        <dbReference type="ChEBI" id="CHEBI:30839"/>
        <dbReference type="ChEBI" id="CHEBI:30864"/>
        <dbReference type="ChEBI" id="CHEBI:132124"/>
        <dbReference type="EC" id="1.3.5.2"/>
    </reaction>
</comment>
<comment type="cofactor">
    <cofactor evidence="1">
        <name>FMN</name>
        <dbReference type="ChEBI" id="CHEBI:58210"/>
    </cofactor>
    <text evidence="1">Binds 1 FMN per subunit.</text>
</comment>
<comment type="pathway">
    <text evidence="1">Pyrimidine metabolism; UMP biosynthesis via de novo pathway; orotate from (S)-dihydroorotate (quinone route): step 1/1.</text>
</comment>
<comment type="subunit">
    <text evidence="1">Monomer.</text>
</comment>
<comment type="subcellular location">
    <subcellularLocation>
        <location evidence="1">Cell membrane</location>
        <topology evidence="1">Peripheral membrane protein</topology>
    </subcellularLocation>
</comment>
<comment type="similarity">
    <text evidence="1">Belongs to the dihydroorotate dehydrogenase family. Type 2 subfamily.</text>
</comment>
<keyword id="KW-1003">Cell membrane</keyword>
<keyword id="KW-0285">Flavoprotein</keyword>
<keyword id="KW-0288">FMN</keyword>
<keyword id="KW-0472">Membrane</keyword>
<keyword id="KW-0560">Oxidoreductase</keyword>
<keyword id="KW-0665">Pyrimidine biosynthesis</keyword>
<name>PYRD_RHOPT</name>
<protein>
    <recommendedName>
        <fullName evidence="1">Dihydroorotate dehydrogenase (quinone)</fullName>
        <ecNumber evidence="1">1.3.5.2</ecNumber>
    </recommendedName>
    <alternativeName>
        <fullName evidence="1">DHOdehase</fullName>
        <shortName evidence="1">DHOD</shortName>
        <shortName evidence="1">DHODase</shortName>
    </alternativeName>
    <alternativeName>
        <fullName evidence="1">Dihydroorotate oxidase</fullName>
    </alternativeName>
</protein>
<reference key="1">
    <citation type="submission" date="2008-05" db="EMBL/GenBank/DDBJ databases">
        <title>Complete sequence of Rhodopseudomonas palustris TIE-1.</title>
        <authorList>
            <consortium name="US DOE Joint Genome Institute"/>
            <person name="Lucas S."/>
            <person name="Copeland A."/>
            <person name="Lapidus A."/>
            <person name="Glavina del Rio T."/>
            <person name="Dalin E."/>
            <person name="Tice H."/>
            <person name="Pitluck S."/>
            <person name="Chain P."/>
            <person name="Malfatti S."/>
            <person name="Shin M."/>
            <person name="Vergez L."/>
            <person name="Lang D."/>
            <person name="Schmutz J."/>
            <person name="Larimer F."/>
            <person name="Land M."/>
            <person name="Hauser L."/>
            <person name="Kyrpides N."/>
            <person name="Mikhailova N."/>
            <person name="Emerson D."/>
            <person name="Newman D.K."/>
            <person name="Roden E."/>
            <person name="Richardson P."/>
        </authorList>
    </citation>
    <scope>NUCLEOTIDE SEQUENCE [LARGE SCALE GENOMIC DNA]</scope>
    <source>
        <strain>TIE-1</strain>
    </source>
</reference>
<evidence type="ECO:0000255" key="1">
    <source>
        <dbReference type="HAMAP-Rule" id="MF_00225"/>
    </source>
</evidence>